<evidence type="ECO:0000250" key="1"/>
<evidence type="ECO:0000305" key="2"/>
<dbReference type="EC" id="6.3.5.-"/>
<dbReference type="EMBL" id="AL591981">
    <property type="protein sequence ID" value="CAC99834.1"/>
    <property type="molecule type" value="Genomic_DNA"/>
</dbReference>
<dbReference type="PIR" id="AD1294">
    <property type="entry name" value="AD1294"/>
</dbReference>
<dbReference type="RefSeq" id="NP_465281.1">
    <property type="nucleotide sequence ID" value="NC_003210.1"/>
</dbReference>
<dbReference type="RefSeq" id="WP_003722233.1">
    <property type="nucleotide sequence ID" value="NZ_CP149495.1"/>
</dbReference>
<dbReference type="SMR" id="P58817"/>
<dbReference type="STRING" id="169963.gene:17594438"/>
<dbReference type="PaxDb" id="169963-lmo1756"/>
<dbReference type="EnsemblBacteria" id="CAC99834">
    <property type="protein sequence ID" value="CAC99834"/>
    <property type="gene ID" value="CAC99834"/>
</dbReference>
<dbReference type="GeneID" id="985549"/>
<dbReference type="KEGG" id="lmo:lmo1756"/>
<dbReference type="PATRIC" id="fig|169963.11.peg.1800"/>
<dbReference type="eggNOG" id="COG0721">
    <property type="taxonomic scope" value="Bacteria"/>
</dbReference>
<dbReference type="HOGENOM" id="CLU_105899_6_1_9"/>
<dbReference type="OrthoDB" id="9813938at2"/>
<dbReference type="PhylomeDB" id="P58817"/>
<dbReference type="BioCyc" id="LMON169963:LMO1756-MONOMER"/>
<dbReference type="Proteomes" id="UP000000817">
    <property type="component" value="Chromosome"/>
</dbReference>
<dbReference type="GO" id="GO:0050566">
    <property type="term" value="F:asparaginyl-tRNA synthase (glutamine-hydrolyzing) activity"/>
    <property type="evidence" value="ECO:0007669"/>
    <property type="project" value="RHEA"/>
</dbReference>
<dbReference type="GO" id="GO:0005524">
    <property type="term" value="F:ATP binding"/>
    <property type="evidence" value="ECO:0007669"/>
    <property type="project" value="UniProtKB-KW"/>
</dbReference>
<dbReference type="GO" id="GO:0050567">
    <property type="term" value="F:glutaminyl-tRNA synthase (glutamine-hydrolyzing) activity"/>
    <property type="evidence" value="ECO:0007669"/>
    <property type="project" value="UniProtKB-UniRule"/>
</dbReference>
<dbReference type="GO" id="GO:0070681">
    <property type="term" value="P:glutaminyl-tRNAGln biosynthesis via transamidation"/>
    <property type="evidence" value="ECO:0000318"/>
    <property type="project" value="GO_Central"/>
</dbReference>
<dbReference type="GO" id="GO:0006450">
    <property type="term" value="P:regulation of translational fidelity"/>
    <property type="evidence" value="ECO:0007669"/>
    <property type="project" value="InterPro"/>
</dbReference>
<dbReference type="GO" id="GO:0006412">
    <property type="term" value="P:translation"/>
    <property type="evidence" value="ECO:0007669"/>
    <property type="project" value="UniProtKB-UniRule"/>
</dbReference>
<dbReference type="Gene3D" id="1.10.20.60">
    <property type="entry name" value="Glu-tRNAGln amidotransferase C subunit, N-terminal domain"/>
    <property type="match status" value="1"/>
</dbReference>
<dbReference type="HAMAP" id="MF_00122">
    <property type="entry name" value="GatC"/>
    <property type="match status" value="1"/>
</dbReference>
<dbReference type="InterPro" id="IPR036113">
    <property type="entry name" value="Asp/Glu-ADT_sf_sub_c"/>
</dbReference>
<dbReference type="InterPro" id="IPR003837">
    <property type="entry name" value="GatC"/>
</dbReference>
<dbReference type="NCBIfam" id="TIGR00135">
    <property type="entry name" value="gatC"/>
    <property type="match status" value="1"/>
</dbReference>
<dbReference type="PANTHER" id="PTHR15004">
    <property type="entry name" value="GLUTAMYL-TRNA(GLN) AMIDOTRANSFERASE SUBUNIT C, MITOCHONDRIAL"/>
    <property type="match status" value="1"/>
</dbReference>
<dbReference type="PANTHER" id="PTHR15004:SF0">
    <property type="entry name" value="GLUTAMYL-TRNA(GLN) AMIDOTRANSFERASE SUBUNIT C, MITOCHONDRIAL"/>
    <property type="match status" value="1"/>
</dbReference>
<dbReference type="Pfam" id="PF02686">
    <property type="entry name" value="GatC"/>
    <property type="match status" value="1"/>
</dbReference>
<dbReference type="SUPFAM" id="SSF141000">
    <property type="entry name" value="Glu-tRNAGln amidotransferase C subunit"/>
    <property type="match status" value="1"/>
</dbReference>
<proteinExistence type="inferred from homology"/>
<protein>
    <recommendedName>
        <fullName>Aspartyl/glutamyl-tRNA(Asn/Gln) amidotransferase subunit C</fullName>
        <shortName>Asp/Glu-ADT subunit C</shortName>
        <ecNumber>6.3.5.-</ecNumber>
    </recommendedName>
</protein>
<organism>
    <name type="scientific">Listeria monocytogenes serovar 1/2a (strain ATCC BAA-679 / EGD-e)</name>
    <dbReference type="NCBI Taxonomy" id="169963"/>
    <lineage>
        <taxon>Bacteria</taxon>
        <taxon>Bacillati</taxon>
        <taxon>Bacillota</taxon>
        <taxon>Bacilli</taxon>
        <taxon>Bacillales</taxon>
        <taxon>Listeriaceae</taxon>
        <taxon>Listeria</taxon>
    </lineage>
</organism>
<accession>P58817</accession>
<feature type="chain" id="PRO_0000105309" description="Aspartyl/glutamyl-tRNA(Asn/Gln) amidotransferase subunit C">
    <location>
        <begin position="1"/>
        <end position="97"/>
    </location>
</feature>
<sequence length="97" mass="10627">MSNISKETVEKVANLAKLEVSETEATAFAGQLGKIIELVEQLNTLDTTNVEPTSHAIDVSNVLREDVATKGLDRKEVLKNAPDEQDGMFKVPTIMEQ</sequence>
<gene>
    <name type="primary">gatC</name>
    <name type="ordered locus">lmo1756</name>
</gene>
<reference key="1">
    <citation type="journal article" date="2001" name="Science">
        <title>Comparative genomics of Listeria species.</title>
        <authorList>
            <person name="Glaser P."/>
            <person name="Frangeul L."/>
            <person name="Buchrieser C."/>
            <person name="Rusniok C."/>
            <person name="Amend A."/>
            <person name="Baquero F."/>
            <person name="Berche P."/>
            <person name="Bloecker H."/>
            <person name="Brandt P."/>
            <person name="Chakraborty T."/>
            <person name="Charbit A."/>
            <person name="Chetouani F."/>
            <person name="Couve E."/>
            <person name="de Daruvar A."/>
            <person name="Dehoux P."/>
            <person name="Domann E."/>
            <person name="Dominguez-Bernal G."/>
            <person name="Duchaud E."/>
            <person name="Durant L."/>
            <person name="Dussurget O."/>
            <person name="Entian K.-D."/>
            <person name="Fsihi H."/>
            <person name="Garcia-del Portillo F."/>
            <person name="Garrido P."/>
            <person name="Gautier L."/>
            <person name="Goebel W."/>
            <person name="Gomez-Lopez N."/>
            <person name="Hain T."/>
            <person name="Hauf J."/>
            <person name="Jackson D."/>
            <person name="Jones L.-M."/>
            <person name="Kaerst U."/>
            <person name="Kreft J."/>
            <person name="Kuhn M."/>
            <person name="Kunst F."/>
            <person name="Kurapkat G."/>
            <person name="Madueno E."/>
            <person name="Maitournam A."/>
            <person name="Mata Vicente J."/>
            <person name="Ng E."/>
            <person name="Nedjari H."/>
            <person name="Nordsiek G."/>
            <person name="Novella S."/>
            <person name="de Pablos B."/>
            <person name="Perez-Diaz J.-C."/>
            <person name="Purcell R."/>
            <person name="Remmel B."/>
            <person name="Rose M."/>
            <person name="Schlueter T."/>
            <person name="Simoes N."/>
            <person name="Tierrez A."/>
            <person name="Vazquez-Boland J.-A."/>
            <person name="Voss H."/>
            <person name="Wehland J."/>
            <person name="Cossart P."/>
        </authorList>
    </citation>
    <scope>NUCLEOTIDE SEQUENCE [LARGE SCALE GENOMIC DNA]</scope>
    <source>
        <strain>ATCC BAA-679 / EGD-e</strain>
    </source>
</reference>
<comment type="function">
    <text evidence="1">Allows the formation of correctly charged Asn-tRNA(Asn) or Gln-tRNA(Gln) through the transamidation of misacylated Asp-tRNA(Asn) or Glu-tRNA(Gln) in organisms which lack either or both of asparaginyl-tRNA or glutaminyl-tRNA synthetases. The reaction takes place in the presence of glutamine and ATP through an activated phospho-Asp-tRNA(Asn) or phospho-Glu-tRNA(Gln) (By similarity).</text>
</comment>
<comment type="catalytic activity">
    <reaction>
        <text>L-glutamyl-tRNA(Gln) + L-glutamine + ATP + H2O = L-glutaminyl-tRNA(Gln) + L-glutamate + ADP + phosphate + H(+)</text>
        <dbReference type="Rhea" id="RHEA:17521"/>
        <dbReference type="Rhea" id="RHEA-COMP:9681"/>
        <dbReference type="Rhea" id="RHEA-COMP:9684"/>
        <dbReference type="ChEBI" id="CHEBI:15377"/>
        <dbReference type="ChEBI" id="CHEBI:15378"/>
        <dbReference type="ChEBI" id="CHEBI:29985"/>
        <dbReference type="ChEBI" id="CHEBI:30616"/>
        <dbReference type="ChEBI" id="CHEBI:43474"/>
        <dbReference type="ChEBI" id="CHEBI:58359"/>
        <dbReference type="ChEBI" id="CHEBI:78520"/>
        <dbReference type="ChEBI" id="CHEBI:78521"/>
        <dbReference type="ChEBI" id="CHEBI:456216"/>
    </reaction>
</comment>
<comment type="catalytic activity">
    <reaction>
        <text>L-aspartyl-tRNA(Asn) + L-glutamine + ATP + H2O = L-asparaginyl-tRNA(Asn) + L-glutamate + ADP + phosphate + 2 H(+)</text>
        <dbReference type="Rhea" id="RHEA:14513"/>
        <dbReference type="Rhea" id="RHEA-COMP:9674"/>
        <dbReference type="Rhea" id="RHEA-COMP:9677"/>
        <dbReference type="ChEBI" id="CHEBI:15377"/>
        <dbReference type="ChEBI" id="CHEBI:15378"/>
        <dbReference type="ChEBI" id="CHEBI:29985"/>
        <dbReference type="ChEBI" id="CHEBI:30616"/>
        <dbReference type="ChEBI" id="CHEBI:43474"/>
        <dbReference type="ChEBI" id="CHEBI:58359"/>
        <dbReference type="ChEBI" id="CHEBI:78515"/>
        <dbReference type="ChEBI" id="CHEBI:78516"/>
        <dbReference type="ChEBI" id="CHEBI:456216"/>
    </reaction>
</comment>
<comment type="subunit">
    <text evidence="1">Heterotrimer of A, B and C subunits.</text>
</comment>
<comment type="similarity">
    <text evidence="2">Belongs to the GatC family.</text>
</comment>
<name>GATC_LISMO</name>
<keyword id="KW-0067">ATP-binding</keyword>
<keyword id="KW-0436">Ligase</keyword>
<keyword id="KW-0547">Nucleotide-binding</keyword>
<keyword id="KW-0648">Protein biosynthesis</keyword>
<keyword id="KW-1185">Reference proteome</keyword>